<feature type="chain" id="PRO_0000117311" description="A-type ATP synthase subunit E">
    <location>
        <begin position="1"/>
        <end position="188"/>
    </location>
</feature>
<sequence length="188" mass="21868">MPLDKVLQEIQQKGEEEVRRIREETEKEVEKILAEAKAEAEEILKKAREEAEKEAEAIRRQEISSVKLEMKRELLNVQKEILEEVFNLLRQKVRDMDEETRKKILKNLLEKNASPGMVVYSRKEDEDIVKELIKELKLDVTYGGNIDCIGGVILEDPAGDIRLNLTFDELVSQVYEQKLSEVSKLLFK</sequence>
<name>AATE_ARCFU</name>
<organism>
    <name type="scientific">Archaeoglobus fulgidus (strain ATCC 49558 / DSM 4304 / JCM 9628 / NBRC 100126 / VC-16)</name>
    <dbReference type="NCBI Taxonomy" id="224325"/>
    <lineage>
        <taxon>Archaea</taxon>
        <taxon>Methanobacteriati</taxon>
        <taxon>Methanobacteriota</taxon>
        <taxon>Archaeoglobi</taxon>
        <taxon>Archaeoglobales</taxon>
        <taxon>Archaeoglobaceae</taxon>
        <taxon>Archaeoglobus</taxon>
    </lineage>
</organism>
<evidence type="ECO:0000255" key="1">
    <source>
        <dbReference type="HAMAP-Rule" id="MF_00311"/>
    </source>
</evidence>
<dbReference type="EMBL" id="AE000782">
    <property type="protein sequence ID" value="AAB90079.1"/>
    <property type="molecule type" value="Genomic_DNA"/>
</dbReference>
<dbReference type="PIR" id="B69395">
    <property type="entry name" value="B69395"/>
</dbReference>
<dbReference type="RefSeq" id="WP_010878659.1">
    <property type="nucleotide sequence ID" value="NC_000917.1"/>
</dbReference>
<dbReference type="SMR" id="O29104"/>
<dbReference type="STRING" id="224325.AF_1163"/>
<dbReference type="PaxDb" id="224325-AF_1163"/>
<dbReference type="EnsemblBacteria" id="AAB90079">
    <property type="protein sequence ID" value="AAB90079"/>
    <property type="gene ID" value="AF_1163"/>
</dbReference>
<dbReference type="KEGG" id="afu:AF_1163"/>
<dbReference type="eggNOG" id="arCOG00869">
    <property type="taxonomic scope" value="Archaea"/>
</dbReference>
<dbReference type="HOGENOM" id="CLU_120786_0_0_2"/>
<dbReference type="OrthoDB" id="4691at2157"/>
<dbReference type="PhylomeDB" id="O29104"/>
<dbReference type="Proteomes" id="UP000002199">
    <property type="component" value="Chromosome"/>
</dbReference>
<dbReference type="GO" id="GO:0005886">
    <property type="term" value="C:plasma membrane"/>
    <property type="evidence" value="ECO:0007669"/>
    <property type="project" value="UniProtKB-SubCell"/>
</dbReference>
<dbReference type="GO" id="GO:0033178">
    <property type="term" value="C:proton-transporting two-sector ATPase complex, catalytic domain"/>
    <property type="evidence" value="ECO:0007669"/>
    <property type="project" value="InterPro"/>
</dbReference>
<dbReference type="GO" id="GO:0005524">
    <property type="term" value="F:ATP binding"/>
    <property type="evidence" value="ECO:0007669"/>
    <property type="project" value="UniProtKB-UniRule"/>
</dbReference>
<dbReference type="GO" id="GO:0046933">
    <property type="term" value="F:proton-transporting ATP synthase activity, rotational mechanism"/>
    <property type="evidence" value="ECO:0007669"/>
    <property type="project" value="UniProtKB-UniRule"/>
</dbReference>
<dbReference type="GO" id="GO:0046961">
    <property type="term" value="F:proton-transporting ATPase activity, rotational mechanism"/>
    <property type="evidence" value="ECO:0007669"/>
    <property type="project" value="InterPro"/>
</dbReference>
<dbReference type="GO" id="GO:0042777">
    <property type="term" value="P:proton motive force-driven plasma membrane ATP synthesis"/>
    <property type="evidence" value="ECO:0007669"/>
    <property type="project" value="UniProtKB-UniRule"/>
</dbReference>
<dbReference type="Gene3D" id="3.30.2320.30">
    <property type="entry name" value="ATP synthase, E subunit, C-terminal"/>
    <property type="match status" value="1"/>
</dbReference>
<dbReference type="Gene3D" id="1.20.5.620">
    <property type="entry name" value="F1F0 ATP synthase subunit B, membrane domain"/>
    <property type="match status" value="1"/>
</dbReference>
<dbReference type="HAMAP" id="MF_00311">
    <property type="entry name" value="ATP_synth_E_arch"/>
    <property type="match status" value="1"/>
</dbReference>
<dbReference type="InterPro" id="IPR038495">
    <property type="entry name" value="ATPase_E_C"/>
</dbReference>
<dbReference type="InterPro" id="IPR002842">
    <property type="entry name" value="ATPase_V1_Esu"/>
</dbReference>
<dbReference type="NCBIfam" id="NF002629">
    <property type="entry name" value="PRK02292.1"/>
    <property type="match status" value="1"/>
</dbReference>
<dbReference type="Pfam" id="PF01991">
    <property type="entry name" value="vATP-synt_E"/>
    <property type="match status" value="1"/>
</dbReference>
<dbReference type="SUPFAM" id="SSF160527">
    <property type="entry name" value="V-type ATPase subunit E-like"/>
    <property type="match status" value="1"/>
</dbReference>
<comment type="function">
    <text evidence="1">Component of the A-type ATP synthase that produces ATP from ADP in the presence of a proton gradient across the membrane.</text>
</comment>
<comment type="subunit">
    <text evidence="1">Has multiple subunits with at least A(3), B(3), C, D, E, F, H, I and proteolipid K(x).</text>
</comment>
<comment type="subcellular location">
    <subcellularLocation>
        <location evidence="1">Cell membrane</location>
        <topology evidence="1">Peripheral membrane protein</topology>
    </subcellularLocation>
</comment>
<comment type="similarity">
    <text evidence="1">Belongs to the V-ATPase E subunit family.</text>
</comment>
<proteinExistence type="inferred from homology"/>
<accession>O29104</accession>
<reference key="1">
    <citation type="journal article" date="1997" name="Nature">
        <title>The complete genome sequence of the hyperthermophilic, sulphate-reducing archaeon Archaeoglobus fulgidus.</title>
        <authorList>
            <person name="Klenk H.-P."/>
            <person name="Clayton R.A."/>
            <person name="Tomb J.-F."/>
            <person name="White O."/>
            <person name="Nelson K.E."/>
            <person name="Ketchum K.A."/>
            <person name="Dodson R.J."/>
            <person name="Gwinn M.L."/>
            <person name="Hickey E.K."/>
            <person name="Peterson J.D."/>
            <person name="Richardson D.L."/>
            <person name="Kerlavage A.R."/>
            <person name="Graham D.E."/>
            <person name="Kyrpides N.C."/>
            <person name="Fleischmann R.D."/>
            <person name="Quackenbush J."/>
            <person name="Lee N.H."/>
            <person name="Sutton G.G."/>
            <person name="Gill S.R."/>
            <person name="Kirkness E.F."/>
            <person name="Dougherty B.A."/>
            <person name="McKenney K."/>
            <person name="Adams M.D."/>
            <person name="Loftus B.J."/>
            <person name="Peterson S.N."/>
            <person name="Reich C.I."/>
            <person name="McNeil L.K."/>
            <person name="Badger J.H."/>
            <person name="Glodek A."/>
            <person name="Zhou L."/>
            <person name="Overbeek R."/>
            <person name="Gocayne J.D."/>
            <person name="Weidman J.F."/>
            <person name="McDonald L.A."/>
            <person name="Utterback T.R."/>
            <person name="Cotton M.D."/>
            <person name="Spriggs T."/>
            <person name="Artiach P."/>
            <person name="Kaine B.P."/>
            <person name="Sykes S.M."/>
            <person name="Sadow P.W."/>
            <person name="D'Andrea K.P."/>
            <person name="Bowman C."/>
            <person name="Fujii C."/>
            <person name="Garland S.A."/>
            <person name="Mason T.M."/>
            <person name="Olsen G.J."/>
            <person name="Fraser C.M."/>
            <person name="Smith H.O."/>
            <person name="Woese C.R."/>
            <person name="Venter J.C."/>
        </authorList>
    </citation>
    <scope>NUCLEOTIDE SEQUENCE [LARGE SCALE GENOMIC DNA]</scope>
    <source>
        <strain>ATCC 49558 / DSM 4304 / JCM 9628 / NBRC 100126 / VC-16</strain>
    </source>
</reference>
<protein>
    <recommendedName>
        <fullName evidence="1">A-type ATP synthase subunit E</fullName>
    </recommendedName>
</protein>
<gene>
    <name evidence="1" type="primary">atpE</name>
    <name type="ordered locus">AF_1163</name>
</gene>
<keyword id="KW-0066">ATP synthesis</keyword>
<keyword id="KW-1003">Cell membrane</keyword>
<keyword id="KW-0375">Hydrogen ion transport</keyword>
<keyword id="KW-0406">Ion transport</keyword>
<keyword id="KW-0472">Membrane</keyword>
<keyword id="KW-1185">Reference proteome</keyword>
<keyword id="KW-0813">Transport</keyword>